<comment type="function">
    <text evidence="1">Cell wall formation.</text>
</comment>
<comment type="catalytic activity">
    <reaction evidence="1">
        <text>UDP-N-acetyl-alpha-D-muramate + L-alanine + ATP = UDP-N-acetyl-alpha-D-muramoyl-L-alanine + ADP + phosphate + H(+)</text>
        <dbReference type="Rhea" id="RHEA:23372"/>
        <dbReference type="ChEBI" id="CHEBI:15378"/>
        <dbReference type="ChEBI" id="CHEBI:30616"/>
        <dbReference type="ChEBI" id="CHEBI:43474"/>
        <dbReference type="ChEBI" id="CHEBI:57972"/>
        <dbReference type="ChEBI" id="CHEBI:70757"/>
        <dbReference type="ChEBI" id="CHEBI:83898"/>
        <dbReference type="ChEBI" id="CHEBI:456216"/>
        <dbReference type="EC" id="6.3.2.8"/>
    </reaction>
</comment>
<comment type="pathway">
    <text evidence="1">Cell wall biogenesis; peptidoglycan biosynthesis.</text>
</comment>
<comment type="subcellular location">
    <subcellularLocation>
        <location evidence="1">Cytoplasm</location>
    </subcellularLocation>
</comment>
<comment type="similarity">
    <text evidence="1">Belongs to the MurCDEF family.</text>
</comment>
<keyword id="KW-0067">ATP-binding</keyword>
<keyword id="KW-0131">Cell cycle</keyword>
<keyword id="KW-0132">Cell division</keyword>
<keyword id="KW-0133">Cell shape</keyword>
<keyword id="KW-0961">Cell wall biogenesis/degradation</keyword>
<keyword id="KW-0963">Cytoplasm</keyword>
<keyword id="KW-0436">Ligase</keyword>
<keyword id="KW-0547">Nucleotide-binding</keyword>
<keyword id="KW-0573">Peptidoglycan synthesis</keyword>
<keyword id="KW-1185">Reference proteome</keyword>
<proteinExistence type="inferred from homology"/>
<feature type="chain" id="PRO_1000074737" description="UDP-N-acetylmuramate--L-alanine ligase">
    <location>
        <begin position="1"/>
        <end position="466"/>
    </location>
</feature>
<feature type="binding site" evidence="1">
    <location>
        <begin position="119"/>
        <end position="125"/>
    </location>
    <ligand>
        <name>ATP</name>
        <dbReference type="ChEBI" id="CHEBI:30616"/>
    </ligand>
</feature>
<dbReference type="EC" id="6.3.2.8" evidence="1"/>
<dbReference type="EMBL" id="CP000383">
    <property type="protein sequence ID" value="ABG59988.1"/>
    <property type="molecule type" value="Genomic_DNA"/>
</dbReference>
<dbReference type="RefSeq" id="WP_011586098.1">
    <property type="nucleotide sequence ID" value="NC_008255.1"/>
</dbReference>
<dbReference type="SMR" id="Q11RH6"/>
<dbReference type="STRING" id="269798.CHU_2738"/>
<dbReference type="KEGG" id="chu:CHU_2738"/>
<dbReference type="eggNOG" id="COG0773">
    <property type="taxonomic scope" value="Bacteria"/>
</dbReference>
<dbReference type="HOGENOM" id="CLU_028104_2_2_10"/>
<dbReference type="OrthoDB" id="9804126at2"/>
<dbReference type="UniPathway" id="UPA00219"/>
<dbReference type="Proteomes" id="UP000001822">
    <property type="component" value="Chromosome"/>
</dbReference>
<dbReference type="GO" id="GO:0005737">
    <property type="term" value="C:cytoplasm"/>
    <property type="evidence" value="ECO:0007669"/>
    <property type="project" value="UniProtKB-SubCell"/>
</dbReference>
<dbReference type="GO" id="GO:0005524">
    <property type="term" value="F:ATP binding"/>
    <property type="evidence" value="ECO:0007669"/>
    <property type="project" value="UniProtKB-UniRule"/>
</dbReference>
<dbReference type="GO" id="GO:0008763">
    <property type="term" value="F:UDP-N-acetylmuramate-L-alanine ligase activity"/>
    <property type="evidence" value="ECO:0007669"/>
    <property type="project" value="UniProtKB-UniRule"/>
</dbReference>
<dbReference type="GO" id="GO:0051301">
    <property type="term" value="P:cell division"/>
    <property type="evidence" value="ECO:0007669"/>
    <property type="project" value="UniProtKB-KW"/>
</dbReference>
<dbReference type="GO" id="GO:0071555">
    <property type="term" value="P:cell wall organization"/>
    <property type="evidence" value="ECO:0007669"/>
    <property type="project" value="UniProtKB-KW"/>
</dbReference>
<dbReference type="GO" id="GO:0009252">
    <property type="term" value="P:peptidoglycan biosynthetic process"/>
    <property type="evidence" value="ECO:0007669"/>
    <property type="project" value="UniProtKB-UniRule"/>
</dbReference>
<dbReference type="GO" id="GO:0008360">
    <property type="term" value="P:regulation of cell shape"/>
    <property type="evidence" value="ECO:0007669"/>
    <property type="project" value="UniProtKB-KW"/>
</dbReference>
<dbReference type="Gene3D" id="3.90.190.20">
    <property type="entry name" value="Mur ligase, C-terminal domain"/>
    <property type="match status" value="1"/>
</dbReference>
<dbReference type="Gene3D" id="3.40.1190.10">
    <property type="entry name" value="Mur-like, catalytic domain"/>
    <property type="match status" value="1"/>
</dbReference>
<dbReference type="Gene3D" id="3.40.50.720">
    <property type="entry name" value="NAD(P)-binding Rossmann-like Domain"/>
    <property type="match status" value="1"/>
</dbReference>
<dbReference type="HAMAP" id="MF_00046">
    <property type="entry name" value="MurC"/>
    <property type="match status" value="1"/>
</dbReference>
<dbReference type="InterPro" id="IPR036565">
    <property type="entry name" value="Mur-like_cat_sf"/>
</dbReference>
<dbReference type="InterPro" id="IPR004101">
    <property type="entry name" value="Mur_ligase_C"/>
</dbReference>
<dbReference type="InterPro" id="IPR036615">
    <property type="entry name" value="Mur_ligase_C_dom_sf"/>
</dbReference>
<dbReference type="InterPro" id="IPR013221">
    <property type="entry name" value="Mur_ligase_cen"/>
</dbReference>
<dbReference type="InterPro" id="IPR000713">
    <property type="entry name" value="Mur_ligase_N"/>
</dbReference>
<dbReference type="InterPro" id="IPR050061">
    <property type="entry name" value="MurCDEF_pg_biosynth"/>
</dbReference>
<dbReference type="InterPro" id="IPR005758">
    <property type="entry name" value="UDP-N-AcMur_Ala_ligase_MurC"/>
</dbReference>
<dbReference type="NCBIfam" id="TIGR01082">
    <property type="entry name" value="murC"/>
    <property type="match status" value="1"/>
</dbReference>
<dbReference type="PANTHER" id="PTHR43445:SF3">
    <property type="entry name" value="UDP-N-ACETYLMURAMATE--L-ALANINE LIGASE"/>
    <property type="match status" value="1"/>
</dbReference>
<dbReference type="PANTHER" id="PTHR43445">
    <property type="entry name" value="UDP-N-ACETYLMURAMATE--L-ALANINE LIGASE-RELATED"/>
    <property type="match status" value="1"/>
</dbReference>
<dbReference type="Pfam" id="PF01225">
    <property type="entry name" value="Mur_ligase"/>
    <property type="match status" value="1"/>
</dbReference>
<dbReference type="Pfam" id="PF02875">
    <property type="entry name" value="Mur_ligase_C"/>
    <property type="match status" value="1"/>
</dbReference>
<dbReference type="Pfam" id="PF08245">
    <property type="entry name" value="Mur_ligase_M"/>
    <property type="match status" value="1"/>
</dbReference>
<dbReference type="SUPFAM" id="SSF51984">
    <property type="entry name" value="MurCD N-terminal domain"/>
    <property type="match status" value="1"/>
</dbReference>
<dbReference type="SUPFAM" id="SSF53623">
    <property type="entry name" value="MurD-like peptide ligases, catalytic domain"/>
    <property type="match status" value="1"/>
</dbReference>
<dbReference type="SUPFAM" id="SSF53244">
    <property type="entry name" value="MurD-like peptide ligases, peptide-binding domain"/>
    <property type="match status" value="1"/>
</dbReference>
<accession>Q11RH6</accession>
<evidence type="ECO:0000255" key="1">
    <source>
        <dbReference type="HAMAP-Rule" id="MF_00046"/>
    </source>
</evidence>
<organism>
    <name type="scientific">Cytophaga hutchinsonii (strain ATCC 33406 / DSM 1761 / CIP 103989 / NBRC 15051 / NCIMB 9469 / D465)</name>
    <dbReference type="NCBI Taxonomy" id="269798"/>
    <lineage>
        <taxon>Bacteria</taxon>
        <taxon>Pseudomonadati</taxon>
        <taxon>Bacteroidota</taxon>
        <taxon>Cytophagia</taxon>
        <taxon>Cytophagales</taxon>
        <taxon>Cytophagaceae</taxon>
        <taxon>Cytophaga</taxon>
    </lineage>
</organism>
<reference key="1">
    <citation type="journal article" date="2007" name="Appl. Environ. Microbiol.">
        <title>Genome sequence of the cellulolytic gliding bacterium Cytophaga hutchinsonii.</title>
        <authorList>
            <person name="Xie G."/>
            <person name="Bruce D.C."/>
            <person name="Challacombe J.F."/>
            <person name="Chertkov O."/>
            <person name="Detter J.C."/>
            <person name="Gilna P."/>
            <person name="Han C.S."/>
            <person name="Lucas S."/>
            <person name="Misra M."/>
            <person name="Myers G.L."/>
            <person name="Richardson P."/>
            <person name="Tapia R."/>
            <person name="Thayer N."/>
            <person name="Thompson L.S."/>
            <person name="Brettin T.S."/>
            <person name="Henrissat B."/>
            <person name="Wilson D.B."/>
            <person name="McBride M.J."/>
        </authorList>
    </citation>
    <scope>NUCLEOTIDE SEQUENCE [LARGE SCALE GENOMIC DNA]</scope>
    <source>
        <strain>ATCC 33406 / DSM 1761 / JCM 20678 / CIP 103989 / IAM 12607 / NBRC 15051 / NCIMB 9469 / D465</strain>
    </source>
</reference>
<protein>
    <recommendedName>
        <fullName evidence="1">UDP-N-acetylmuramate--L-alanine ligase</fullName>
        <ecNumber evidence="1">6.3.2.8</ecNumber>
    </recommendedName>
    <alternativeName>
        <fullName evidence="1">UDP-N-acetylmuramoyl-L-alanine synthetase</fullName>
    </alternativeName>
</protein>
<sequence>MNLTHIHSVYLIGIGGIGMSALARWFKQNNYNVGGYDKTSSDLTKALEAEGMAVHYTDSMAEVPEAFTKKDSVLVIYTPAIPADHLELNFFRENGYALYKRSQVLGFLTKELKTIGIAGTHGKTTTSSMAAHIMHESGMPCSAFLGGITQNYNTNILIGNHGDGAGWVVAEADEYDRSFLQLSPDIAVINNMDPDHLDIYSDVQSFYDSFNEYLKKLKPGGIVIRRVDVDVQIPSHASLSVTFGESVEADYRIQNVVVEDGGVTFSIDHDFTRWNNIRIEMPGMHNVMNATAAFLAAHFAGVSIDSIKASLRSFGGVKRRFEYIYKNTKLVYVDDYAHHPTELEALLKAVRMVFPGKKVVTVFQPHLFSRTRDFMQEFAQSLALTDELLLMEIYPARELPIEGITSDVLLNLIPSTNKKVVSKESLLTELEKLNFDVVITAGAGDIDRFIQPIKLLCEQRYGKANG</sequence>
<name>MURC_CYTH3</name>
<gene>
    <name evidence="1" type="primary">murC</name>
    <name type="ordered locus">CHU_2738</name>
</gene>